<dbReference type="EMBL" id="CP000675">
    <property type="protein sequence ID" value="ABQ54474.1"/>
    <property type="molecule type" value="Genomic_DNA"/>
</dbReference>
<dbReference type="RefSeq" id="WP_011947567.1">
    <property type="nucleotide sequence ID" value="NZ_JAPMSS010000010.1"/>
</dbReference>
<dbReference type="SMR" id="A5IAS4"/>
<dbReference type="KEGG" id="lpc:LPC_0487"/>
<dbReference type="HOGENOM" id="CLU_075939_0_1_6"/>
<dbReference type="GO" id="GO:0022625">
    <property type="term" value="C:cytosolic large ribosomal subunit"/>
    <property type="evidence" value="ECO:0007669"/>
    <property type="project" value="TreeGrafter"/>
</dbReference>
<dbReference type="GO" id="GO:0008097">
    <property type="term" value="F:5S rRNA binding"/>
    <property type="evidence" value="ECO:0007669"/>
    <property type="project" value="InterPro"/>
</dbReference>
<dbReference type="GO" id="GO:0003735">
    <property type="term" value="F:structural constituent of ribosome"/>
    <property type="evidence" value="ECO:0007669"/>
    <property type="project" value="InterPro"/>
</dbReference>
<dbReference type="GO" id="GO:0006412">
    <property type="term" value="P:translation"/>
    <property type="evidence" value="ECO:0007669"/>
    <property type="project" value="UniProtKB-UniRule"/>
</dbReference>
<dbReference type="CDD" id="cd00495">
    <property type="entry name" value="Ribosomal_L25_TL5_CTC"/>
    <property type="match status" value="1"/>
</dbReference>
<dbReference type="FunFam" id="2.40.240.10:FF:000002">
    <property type="entry name" value="50S ribosomal protein L25"/>
    <property type="match status" value="1"/>
</dbReference>
<dbReference type="Gene3D" id="2.170.120.20">
    <property type="entry name" value="Ribosomal protein L25, beta domain"/>
    <property type="match status" value="1"/>
</dbReference>
<dbReference type="Gene3D" id="2.40.240.10">
    <property type="entry name" value="Ribosomal Protein L25, Chain P"/>
    <property type="match status" value="1"/>
</dbReference>
<dbReference type="HAMAP" id="MF_01334">
    <property type="entry name" value="Ribosomal_bL25_CTC"/>
    <property type="match status" value="1"/>
</dbReference>
<dbReference type="InterPro" id="IPR020056">
    <property type="entry name" value="Rbsml_bL25/Gln-tRNA_synth_N"/>
</dbReference>
<dbReference type="InterPro" id="IPR011035">
    <property type="entry name" value="Ribosomal_bL25/Gln-tRNA_synth"/>
</dbReference>
<dbReference type="InterPro" id="IPR020057">
    <property type="entry name" value="Ribosomal_bL25_b-dom"/>
</dbReference>
<dbReference type="InterPro" id="IPR037121">
    <property type="entry name" value="Ribosomal_bL25_C"/>
</dbReference>
<dbReference type="InterPro" id="IPR001021">
    <property type="entry name" value="Ribosomal_bL25_long"/>
</dbReference>
<dbReference type="InterPro" id="IPR029751">
    <property type="entry name" value="Ribosomal_L25_dom"/>
</dbReference>
<dbReference type="InterPro" id="IPR020930">
    <property type="entry name" value="Ribosomal_uL5_bac-type"/>
</dbReference>
<dbReference type="NCBIfam" id="TIGR00731">
    <property type="entry name" value="bL25_bact_ctc"/>
    <property type="match status" value="1"/>
</dbReference>
<dbReference type="NCBIfam" id="NF004128">
    <property type="entry name" value="PRK05618.1-2"/>
    <property type="match status" value="1"/>
</dbReference>
<dbReference type="NCBIfam" id="NF004130">
    <property type="entry name" value="PRK05618.1-5"/>
    <property type="match status" value="1"/>
</dbReference>
<dbReference type="NCBIfam" id="NF004612">
    <property type="entry name" value="PRK05943.1"/>
    <property type="match status" value="1"/>
</dbReference>
<dbReference type="PANTHER" id="PTHR33284">
    <property type="entry name" value="RIBOSOMAL PROTEIN L25/GLN-TRNA SYNTHETASE, ANTI-CODON-BINDING DOMAIN-CONTAINING PROTEIN"/>
    <property type="match status" value="1"/>
</dbReference>
<dbReference type="PANTHER" id="PTHR33284:SF1">
    <property type="entry name" value="RIBOSOMAL PROTEIN L25_GLN-TRNA SYNTHETASE, ANTI-CODON-BINDING DOMAIN-CONTAINING PROTEIN"/>
    <property type="match status" value="1"/>
</dbReference>
<dbReference type="Pfam" id="PF01386">
    <property type="entry name" value="Ribosomal_L25p"/>
    <property type="match status" value="1"/>
</dbReference>
<dbReference type="Pfam" id="PF14693">
    <property type="entry name" value="Ribosomal_TL5_C"/>
    <property type="match status" value="1"/>
</dbReference>
<dbReference type="SUPFAM" id="SSF50715">
    <property type="entry name" value="Ribosomal protein L25-like"/>
    <property type="match status" value="1"/>
</dbReference>
<keyword id="KW-0687">Ribonucleoprotein</keyword>
<keyword id="KW-0689">Ribosomal protein</keyword>
<keyword id="KW-0694">RNA-binding</keyword>
<keyword id="KW-0699">rRNA-binding</keyword>
<gene>
    <name evidence="1" type="primary">rplY</name>
    <name evidence="1" type="synonym">ctc</name>
    <name type="ordered locus">LPC_0487</name>
</gene>
<feature type="chain" id="PRO_1000052898" description="Large ribosomal subunit protein bL25">
    <location>
        <begin position="1"/>
        <end position="219"/>
    </location>
</feature>
<feature type="region of interest" description="Disordered" evidence="2">
    <location>
        <begin position="193"/>
        <end position="219"/>
    </location>
</feature>
<feature type="compositionally biased region" description="Polar residues" evidence="2">
    <location>
        <begin position="209"/>
        <end position="219"/>
    </location>
</feature>
<accession>A5IAS4</accession>
<protein>
    <recommendedName>
        <fullName evidence="1">Large ribosomal subunit protein bL25</fullName>
    </recommendedName>
    <alternativeName>
        <fullName evidence="3">50S ribosomal protein L25</fullName>
    </alternativeName>
    <alternativeName>
        <fullName evidence="1">General stress protein CTC</fullName>
    </alternativeName>
</protein>
<proteinExistence type="inferred from homology"/>
<evidence type="ECO:0000255" key="1">
    <source>
        <dbReference type="HAMAP-Rule" id="MF_01334"/>
    </source>
</evidence>
<evidence type="ECO:0000256" key="2">
    <source>
        <dbReference type="SAM" id="MobiDB-lite"/>
    </source>
</evidence>
<evidence type="ECO:0000305" key="3"/>
<organism>
    <name type="scientific">Legionella pneumophila (strain Corby)</name>
    <dbReference type="NCBI Taxonomy" id="400673"/>
    <lineage>
        <taxon>Bacteria</taxon>
        <taxon>Pseudomonadati</taxon>
        <taxon>Pseudomonadota</taxon>
        <taxon>Gammaproteobacteria</taxon>
        <taxon>Legionellales</taxon>
        <taxon>Legionellaceae</taxon>
        <taxon>Legionella</taxon>
    </lineage>
</organism>
<name>RL25_LEGPC</name>
<sequence length="219" mass="24017">MSTIQLEAQSRTDMGKGASRRLRRLENKVPAVIYGGSKKPMAIHFSHNKVIKALETESIYSSVFDITVDGKVEHVILKALQRHPYKPIVLHMDLQRVSSKDILVKLVPVHFINEEQSPGIKAGGIVQHTMTQVEIRCQAKDLPEFIEVDMSKVGMDDVVHLSDLKLPKGVQLTVDVTDGSHDAPVVSIHAAKVSSTELEETPEVPASAVPTTDQGESAE</sequence>
<reference key="1">
    <citation type="submission" date="2006-11" db="EMBL/GenBank/DDBJ databases">
        <title>Identification and characterization of a new conjugation/ type IVA secretion system (trb/tra) of L. pneumophila Corby localized on a mobile genomic island.</title>
        <authorList>
            <person name="Gloeckner G."/>
            <person name="Albert-Weissenberger C."/>
            <person name="Weinmann E."/>
            <person name="Jacobi S."/>
            <person name="Schunder E."/>
            <person name="Steinert M."/>
            <person name="Buchrieser C."/>
            <person name="Hacker J."/>
            <person name="Heuner K."/>
        </authorList>
    </citation>
    <scope>NUCLEOTIDE SEQUENCE [LARGE SCALE GENOMIC DNA]</scope>
    <source>
        <strain>Corby</strain>
    </source>
</reference>
<comment type="function">
    <text evidence="1">This is one of the proteins that binds to the 5S RNA in the ribosome where it forms part of the central protuberance.</text>
</comment>
<comment type="subunit">
    <text evidence="1">Part of the 50S ribosomal subunit; part of the 5S rRNA/L5/L18/L25 subcomplex. Contacts the 5S rRNA. Binds to the 5S rRNA independently of L5 and L18.</text>
</comment>
<comment type="similarity">
    <text evidence="1">Belongs to the bacterial ribosomal protein bL25 family. CTC subfamily.</text>
</comment>